<accession>Q72NG3</accession>
<gene>
    <name evidence="1" type="primary">rplW</name>
    <name type="ordered locus">LIC_12871</name>
</gene>
<evidence type="ECO:0000255" key="1">
    <source>
        <dbReference type="HAMAP-Rule" id="MF_01369"/>
    </source>
</evidence>
<evidence type="ECO:0000305" key="2"/>
<proteinExistence type="inferred from homology"/>
<reference key="1">
    <citation type="journal article" date="2004" name="J. Bacteriol.">
        <title>Comparative genomics of two Leptospira interrogans serovars reveals novel insights into physiology and pathogenesis.</title>
        <authorList>
            <person name="Nascimento A.L.T.O."/>
            <person name="Ko A.I."/>
            <person name="Martins E.A.L."/>
            <person name="Monteiro-Vitorello C.B."/>
            <person name="Ho P.L."/>
            <person name="Haake D.A."/>
            <person name="Verjovski-Almeida S."/>
            <person name="Hartskeerl R.A."/>
            <person name="Marques M.V."/>
            <person name="Oliveira M.C."/>
            <person name="Menck C.F.M."/>
            <person name="Leite L.C.C."/>
            <person name="Carrer H."/>
            <person name="Coutinho L.L."/>
            <person name="Degrave W.M."/>
            <person name="Dellagostin O.A."/>
            <person name="El-Dorry H."/>
            <person name="Ferro E.S."/>
            <person name="Ferro M.I.T."/>
            <person name="Furlan L.R."/>
            <person name="Gamberini M."/>
            <person name="Giglioti E.A."/>
            <person name="Goes-Neto A."/>
            <person name="Goldman G.H."/>
            <person name="Goldman M.H.S."/>
            <person name="Harakava R."/>
            <person name="Jeronimo S.M.B."/>
            <person name="Junqueira-de-Azevedo I.L.M."/>
            <person name="Kimura E.T."/>
            <person name="Kuramae E.E."/>
            <person name="Lemos E.G.M."/>
            <person name="Lemos M.V.F."/>
            <person name="Marino C.L."/>
            <person name="Nunes L.R."/>
            <person name="de Oliveira R.C."/>
            <person name="Pereira G.G."/>
            <person name="Reis M.S."/>
            <person name="Schriefer A."/>
            <person name="Siqueira W.J."/>
            <person name="Sommer P."/>
            <person name="Tsai S.M."/>
            <person name="Simpson A.J.G."/>
            <person name="Ferro J.A."/>
            <person name="Camargo L.E.A."/>
            <person name="Kitajima J.P."/>
            <person name="Setubal J.C."/>
            <person name="Van Sluys M.A."/>
        </authorList>
    </citation>
    <scope>NUCLEOTIDE SEQUENCE [LARGE SCALE GENOMIC DNA]</scope>
    <source>
        <strain>Fiocruz L1-130</strain>
    </source>
</reference>
<feature type="chain" id="PRO_0000129413" description="Large ribosomal subunit protein uL23">
    <location>
        <begin position="1"/>
        <end position="104"/>
    </location>
</feature>
<keyword id="KW-0687">Ribonucleoprotein</keyword>
<keyword id="KW-0689">Ribosomal protein</keyword>
<keyword id="KW-0694">RNA-binding</keyword>
<keyword id="KW-0699">rRNA-binding</keyword>
<protein>
    <recommendedName>
        <fullName evidence="1">Large ribosomal subunit protein uL23</fullName>
    </recommendedName>
    <alternativeName>
        <fullName evidence="2">50S ribosomal protein L23</fullName>
    </alternativeName>
</protein>
<sequence length="104" mass="11804">MNLQDVILTPIVTEKSQDLETIGANSKKGTRMVKYTVKVHIDANKTLIKEAFKKIFKVTPSSVNVQVYRGKIKRFRNMPAARPHWKKAIVTFRDGASIDFAKEA</sequence>
<name>RL23_LEPIC</name>
<dbReference type="EMBL" id="AE016823">
    <property type="protein sequence ID" value="AAS71424.1"/>
    <property type="molecule type" value="Genomic_DNA"/>
</dbReference>
<dbReference type="RefSeq" id="WP_001053134.1">
    <property type="nucleotide sequence ID" value="NC_005823.1"/>
</dbReference>
<dbReference type="SMR" id="Q72NG3"/>
<dbReference type="KEGG" id="lic:LIC_12871"/>
<dbReference type="HOGENOM" id="CLU_037562_3_2_12"/>
<dbReference type="Proteomes" id="UP000007037">
    <property type="component" value="Chromosome I"/>
</dbReference>
<dbReference type="GO" id="GO:1990904">
    <property type="term" value="C:ribonucleoprotein complex"/>
    <property type="evidence" value="ECO:0007669"/>
    <property type="project" value="UniProtKB-KW"/>
</dbReference>
<dbReference type="GO" id="GO:0005840">
    <property type="term" value="C:ribosome"/>
    <property type="evidence" value="ECO:0007669"/>
    <property type="project" value="UniProtKB-KW"/>
</dbReference>
<dbReference type="GO" id="GO:0019843">
    <property type="term" value="F:rRNA binding"/>
    <property type="evidence" value="ECO:0007669"/>
    <property type="project" value="UniProtKB-UniRule"/>
</dbReference>
<dbReference type="GO" id="GO:0003735">
    <property type="term" value="F:structural constituent of ribosome"/>
    <property type="evidence" value="ECO:0007669"/>
    <property type="project" value="InterPro"/>
</dbReference>
<dbReference type="GO" id="GO:0006412">
    <property type="term" value="P:translation"/>
    <property type="evidence" value="ECO:0007669"/>
    <property type="project" value="UniProtKB-UniRule"/>
</dbReference>
<dbReference type="Gene3D" id="3.30.70.330">
    <property type="match status" value="1"/>
</dbReference>
<dbReference type="HAMAP" id="MF_01369_B">
    <property type="entry name" value="Ribosomal_uL23_B"/>
    <property type="match status" value="1"/>
</dbReference>
<dbReference type="InterPro" id="IPR012677">
    <property type="entry name" value="Nucleotide-bd_a/b_plait_sf"/>
</dbReference>
<dbReference type="InterPro" id="IPR013025">
    <property type="entry name" value="Ribosomal_uL23-like"/>
</dbReference>
<dbReference type="InterPro" id="IPR012678">
    <property type="entry name" value="Ribosomal_uL23/eL15/eS24_sf"/>
</dbReference>
<dbReference type="NCBIfam" id="NF004363">
    <property type="entry name" value="PRK05738.2-4"/>
    <property type="match status" value="1"/>
</dbReference>
<dbReference type="NCBIfam" id="NF004369">
    <property type="entry name" value="PRK05738.3-5"/>
    <property type="match status" value="1"/>
</dbReference>
<dbReference type="Pfam" id="PF00276">
    <property type="entry name" value="Ribosomal_L23"/>
    <property type="match status" value="1"/>
</dbReference>
<dbReference type="SUPFAM" id="SSF54189">
    <property type="entry name" value="Ribosomal proteins S24e, L23 and L15e"/>
    <property type="match status" value="1"/>
</dbReference>
<comment type="function">
    <text evidence="1">One of the early assembly proteins it binds 23S rRNA. One of the proteins that surrounds the polypeptide exit tunnel on the outside of the ribosome. Forms the main docking site for trigger factor binding to the ribosome.</text>
</comment>
<comment type="subunit">
    <text evidence="1">Part of the 50S ribosomal subunit. Contacts protein L29, and trigger factor when it is bound to the ribosome.</text>
</comment>
<comment type="similarity">
    <text evidence="1">Belongs to the universal ribosomal protein uL23 family.</text>
</comment>
<organism>
    <name type="scientific">Leptospira interrogans serogroup Icterohaemorrhagiae serovar copenhageni (strain Fiocruz L1-130)</name>
    <dbReference type="NCBI Taxonomy" id="267671"/>
    <lineage>
        <taxon>Bacteria</taxon>
        <taxon>Pseudomonadati</taxon>
        <taxon>Spirochaetota</taxon>
        <taxon>Spirochaetia</taxon>
        <taxon>Leptospirales</taxon>
        <taxon>Leptospiraceae</taxon>
        <taxon>Leptospira</taxon>
    </lineage>
</organism>